<evidence type="ECO:0000250" key="1">
    <source>
        <dbReference type="UniProtKB" id="Q96I23"/>
    </source>
</evidence>
<evidence type="ECO:0000255" key="2"/>
<evidence type="ECO:0000305" key="3"/>
<name>PREY_MOUSE</name>
<gene>
    <name type="primary">Pyurf</name>
    <name type="synonym">Pigy</name>
    <name type="synonym">Prey</name>
</gene>
<sequence length="112" mass="12506">MLSATCRRLAPALRRLRALSAVAGRFLQVPGARLCSDQSERAEQPHTFHPALLQFLVCPLSKKPLRYEASTNELVNEELGIAYPIIDGIPNMIPQAARTTRQNEKQEEAEQP</sequence>
<dbReference type="EMBL" id="AK003713">
    <property type="protein sequence ID" value="BAB22953.1"/>
    <property type="molecule type" value="mRNA"/>
</dbReference>
<dbReference type="EMBL" id="AK029193">
    <property type="protein sequence ID" value="BAC26342.1"/>
    <property type="molecule type" value="mRNA"/>
</dbReference>
<dbReference type="EMBL" id="AK032381">
    <property type="protein sequence ID" value="BAC27846.1"/>
    <property type="molecule type" value="mRNA"/>
</dbReference>
<dbReference type="EMBL" id="BC029232">
    <property type="protein sequence ID" value="AAH29232.1"/>
    <property type="molecule type" value="mRNA"/>
</dbReference>
<dbReference type="CCDS" id="CCDS20184.1"/>
<dbReference type="RefSeq" id="NP_079850.1">
    <property type="nucleotide sequence ID" value="NM_025574.3"/>
</dbReference>
<dbReference type="SMR" id="Q9D1C3"/>
<dbReference type="FunCoup" id="Q9D1C3">
    <property type="interactions" value="1073"/>
</dbReference>
<dbReference type="STRING" id="10090.ENSMUSP00000050958"/>
<dbReference type="iPTMnet" id="Q9D1C3"/>
<dbReference type="PhosphoSitePlus" id="Q9D1C3"/>
<dbReference type="SwissPalm" id="Q9D1C3"/>
<dbReference type="PaxDb" id="10090-ENSMUSP00000050958"/>
<dbReference type="PeptideAtlas" id="Q9D1C3"/>
<dbReference type="ProteomicsDB" id="289405"/>
<dbReference type="Antibodypedia" id="25633">
    <property type="antibodies" value="19 antibodies from 10 providers"/>
</dbReference>
<dbReference type="Ensembl" id="ENSMUST00000053386.6">
    <property type="protein sequence ID" value="ENSMUSP00000050958.6"/>
    <property type="gene ID" value="ENSMUSG00000043162.8"/>
</dbReference>
<dbReference type="GeneID" id="66459"/>
<dbReference type="KEGG" id="mmu:66459"/>
<dbReference type="UCSC" id="uc009ccm.1">
    <property type="organism name" value="mouse"/>
</dbReference>
<dbReference type="AGR" id="MGI:1913709"/>
<dbReference type="CTD" id="100996939"/>
<dbReference type="MGI" id="MGI:1913709">
    <property type="gene designation" value="Pyurf"/>
</dbReference>
<dbReference type="VEuPathDB" id="HostDB:ENSMUSG00000043162"/>
<dbReference type="eggNOG" id="ENOG502S7H4">
    <property type="taxonomic scope" value="Eukaryota"/>
</dbReference>
<dbReference type="HOGENOM" id="CLU_155659_0_0_1"/>
<dbReference type="InParanoid" id="Q9D1C3"/>
<dbReference type="OMA" id="EYPIWQG"/>
<dbReference type="OrthoDB" id="1884515at2759"/>
<dbReference type="PhylomeDB" id="Q9D1C3"/>
<dbReference type="TreeFam" id="TF337006"/>
<dbReference type="Reactome" id="R-MMU-6799198">
    <property type="pathway name" value="Complex I biogenesis"/>
</dbReference>
<dbReference type="BioGRID-ORCS" id="66459">
    <property type="hits" value="6 hits in 77 CRISPR screens"/>
</dbReference>
<dbReference type="ChiTaRS" id="Pyurf">
    <property type="organism name" value="mouse"/>
</dbReference>
<dbReference type="PRO" id="PR:Q9D1C3"/>
<dbReference type="Proteomes" id="UP000000589">
    <property type="component" value="Chromosome 6"/>
</dbReference>
<dbReference type="RNAct" id="Q9D1C3">
    <property type="molecule type" value="protein"/>
</dbReference>
<dbReference type="Bgee" id="ENSMUSG00000043162">
    <property type="expression patterns" value="Expressed in right kidney and 60 other cell types or tissues"/>
</dbReference>
<dbReference type="GO" id="GO:0005789">
    <property type="term" value="C:endoplasmic reticulum membrane"/>
    <property type="evidence" value="ECO:0000250"/>
    <property type="project" value="HGNC-UCL"/>
</dbReference>
<dbReference type="GO" id="GO:0000506">
    <property type="term" value="C:glycosylphosphatidylinositol-N-acetylglucosaminyltransferase (GPI-GnT) complex"/>
    <property type="evidence" value="ECO:0000247"/>
    <property type="project" value="MGI"/>
</dbReference>
<dbReference type="GO" id="GO:0005739">
    <property type="term" value="C:mitochondrion"/>
    <property type="evidence" value="ECO:0007005"/>
    <property type="project" value="MGI"/>
</dbReference>
<dbReference type="GO" id="GO:0005886">
    <property type="term" value="C:plasma membrane"/>
    <property type="evidence" value="ECO:0000247"/>
    <property type="project" value="MGI"/>
</dbReference>
<dbReference type="GO" id="GO:0006506">
    <property type="term" value="P:GPI anchor biosynthetic process"/>
    <property type="evidence" value="ECO:0000247"/>
    <property type="project" value="MGI"/>
</dbReference>
<dbReference type="GO" id="GO:0050821">
    <property type="term" value="P:protein stabilization"/>
    <property type="evidence" value="ECO:0000250"/>
    <property type="project" value="UniProtKB"/>
</dbReference>
<dbReference type="FunFam" id="2.20.25.10:FF:000017">
    <property type="entry name" value="protein preY, mitochondrial"/>
    <property type="match status" value="1"/>
</dbReference>
<dbReference type="Gene3D" id="2.20.25.10">
    <property type="match status" value="1"/>
</dbReference>
<dbReference type="HAMAP" id="MF_01187">
    <property type="entry name" value="UPF0434"/>
    <property type="match status" value="1"/>
</dbReference>
<dbReference type="InterPro" id="IPR005651">
    <property type="entry name" value="Trm112-like"/>
</dbReference>
<dbReference type="PANTHER" id="PTHR33505:SF4">
    <property type="entry name" value="PROTEIN PREY, MITOCHONDRIAL"/>
    <property type="match status" value="1"/>
</dbReference>
<dbReference type="PANTHER" id="PTHR33505">
    <property type="entry name" value="ZGC:162634"/>
    <property type="match status" value="1"/>
</dbReference>
<dbReference type="Pfam" id="PF03966">
    <property type="entry name" value="Trm112p"/>
    <property type="match status" value="1"/>
</dbReference>
<dbReference type="SUPFAM" id="SSF158997">
    <property type="entry name" value="Trm112p-like"/>
    <property type="match status" value="1"/>
</dbReference>
<protein>
    <recommendedName>
        <fullName>Protein preY, mitochondrial</fullName>
    </recommendedName>
</protein>
<feature type="transit peptide" description="Mitochondrion" evidence="2">
    <location>
        <begin position="1"/>
        <end position="34"/>
    </location>
</feature>
<feature type="chain" id="PRO_0000246316" description="Protein preY, mitochondrial">
    <location>
        <begin position="35"/>
        <end position="112"/>
    </location>
</feature>
<feature type="domain" description="TRM112">
    <location>
        <begin position="49"/>
        <end position="95"/>
    </location>
</feature>
<reference key="1">
    <citation type="journal article" date="2005" name="Science">
        <title>The transcriptional landscape of the mammalian genome.</title>
        <authorList>
            <person name="Carninci P."/>
            <person name="Kasukawa T."/>
            <person name="Katayama S."/>
            <person name="Gough J."/>
            <person name="Frith M.C."/>
            <person name="Maeda N."/>
            <person name="Oyama R."/>
            <person name="Ravasi T."/>
            <person name="Lenhard B."/>
            <person name="Wells C."/>
            <person name="Kodzius R."/>
            <person name="Shimokawa K."/>
            <person name="Bajic V.B."/>
            <person name="Brenner S.E."/>
            <person name="Batalov S."/>
            <person name="Forrest A.R."/>
            <person name="Zavolan M."/>
            <person name="Davis M.J."/>
            <person name="Wilming L.G."/>
            <person name="Aidinis V."/>
            <person name="Allen J.E."/>
            <person name="Ambesi-Impiombato A."/>
            <person name="Apweiler R."/>
            <person name="Aturaliya R.N."/>
            <person name="Bailey T.L."/>
            <person name="Bansal M."/>
            <person name="Baxter L."/>
            <person name="Beisel K.W."/>
            <person name="Bersano T."/>
            <person name="Bono H."/>
            <person name="Chalk A.M."/>
            <person name="Chiu K.P."/>
            <person name="Choudhary V."/>
            <person name="Christoffels A."/>
            <person name="Clutterbuck D.R."/>
            <person name="Crowe M.L."/>
            <person name="Dalla E."/>
            <person name="Dalrymple B.P."/>
            <person name="de Bono B."/>
            <person name="Della Gatta G."/>
            <person name="di Bernardo D."/>
            <person name="Down T."/>
            <person name="Engstrom P."/>
            <person name="Fagiolini M."/>
            <person name="Faulkner G."/>
            <person name="Fletcher C.F."/>
            <person name="Fukushima T."/>
            <person name="Furuno M."/>
            <person name="Futaki S."/>
            <person name="Gariboldi M."/>
            <person name="Georgii-Hemming P."/>
            <person name="Gingeras T.R."/>
            <person name="Gojobori T."/>
            <person name="Green R.E."/>
            <person name="Gustincich S."/>
            <person name="Harbers M."/>
            <person name="Hayashi Y."/>
            <person name="Hensch T.K."/>
            <person name="Hirokawa N."/>
            <person name="Hill D."/>
            <person name="Huminiecki L."/>
            <person name="Iacono M."/>
            <person name="Ikeo K."/>
            <person name="Iwama A."/>
            <person name="Ishikawa T."/>
            <person name="Jakt M."/>
            <person name="Kanapin A."/>
            <person name="Katoh M."/>
            <person name="Kawasawa Y."/>
            <person name="Kelso J."/>
            <person name="Kitamura H."/>
            <person name="Kitano H."/>
            <person name="Kollias G."/>
            <person name="Krishnan S.P."/>
            <person name="Kruger A."/>
            <person name="Kummerfeld S.K."/>
            <person name="Kurochkin I.V."/>
            <person name="Lareau L.F."/>
            <person name="Lazarevic D."/>
            <person name="Lipovich L."/>
            <person name="Liu J."/>
            <person name="Liuni S."/>
            <person name="McWilliam S."/>
            <person name="Madan Babu M."/>
            <person name="Madera M."/>
            <person name="Marchionni L."/>
            <person name="Matsuda H."/>
            <person name="Matsuzawa S."/>
            <person name="Miki H."/>
            <person name="Mignone F."/>
            <person name="Miyake S."/>
            <person name="Morris K."/>
            <person name="Mottagui-Tabar S."/>
            <person name="Mulder N."/>
            <person name="Nakano N."/>
            <person name="Nakauchi H."/>
            <person name="Ng P."/>
            <person name="Nilsson R."/>
            <person name="Nishiguchi S."/>
            <person name="Nishikawa S."/>
            <person name="Nori F."/>
            <person name="Ohara O."/>
            <person name="Okazaki Y."/>
            <person name="Orlando V."/>
            <person name="Pang K.C."/>
            <person name="Pavan W.J."/>
            <person name="Pavesi G."/>
            <person name="Pesole G."/>
            <person name="Petrovsky N."/>
            <person name="Piazza S."/>
            <person name="Reed J."/>
            <person name="Reid J.F."/>
            <person name="Ring B.Z."/>
            <person name="Ringwald M."/>
            <person name="Rost B."/>
            <person name="Ruan Y."/>
            <person name="Salzberg S.L."/>
            <person name="Sandelin A."/>
            <person name="Schneider C."/>
            <person name="Schoenbach C."/>
            <person name="Sekiguchi K."/>
            <person name="Semple C.A."/>
            <person name="Seno S."/>
            <person name="Sessa L."/>
            <person name="Sheng Y."/>
            <person name="Shibata Y."/>
            <person name="Shimada H."/>
            <person name="Shimada K."/>
            <person name="Silva D."/>
            <person name="Sinclair B."/>
            <person name="Sperling S."/>
            <person name="Stupka E."/>
            <person name="Sugiura K."/>
            <person name="Sultana R."/>
            <person name="Takenaka Y."/>
            <person name="Taki K."/>
            <person name="Tammoja K."/>
            <person name="Tan S.L."/>
            <person name="Tang S."/>
            <person name="Taylor M.S."/>
            <person name="Tegner J."/>
            <person name="Teichmann S.A."/>
            <person name="Ueda H.R."/>
            <person name="van Nimwegen E."/>
            <person name="Verardo R."/>
            <person name="Wei C.L."/>
            <person name="Yagi K."/>
            <person name="Yamanishi H."/>
            <person name="Zabarovsky E."/>
            <person name="Zhu S."/>
            <person name="Zimmer A."/>
            <person name="Hide W."/>
            <person name="Bult C."/>
            <person name="Grimmond S.M."/>
            <person name="Teasdale R.D."/>
            <person name="Liu E.T."/>
            <person name="Brusic V."/>
            <person name="Quackenbush J."/>
            <person name="Wahlestedt C."/>
            <person name="Mattick J.S."/>
            <person name="Hume D.A."/>
            <person name="Kai C."/>
            <person name="Sasaki D."/>
            <person name="Tomaru Y."/>
            <person name="Fukuda S."/>
            <person name="Kanamori-Katayama M."/>
            <person name="Suzuki M."/>
            <person name="Aoki J."/>
            <person name="Arakawa T."/>
            <person name="Iida J."/>
            <person name="Imamura K."/>
            <person name="Itoh M."/>
            <person name="Kato T."/>
            <person name="Kawaji H."/>
            <person name="Kawagashira N."/>
            <person name="Kawashima T."/>
            <person name="Kojima M."/>
            <person name="Kondo S."/>
            <person name="Konno H."/>
            <person name="Nakano K."/>
            <person name="Ninomiya N."/>
            <person name="Nishio T."/>
            <person name="Okada M."/>
            <person name="Plessy C."/>
            <person name="Shibata K."/>
            <person name="Shiraki T."/>
            <person name="Suzuki S."/>
            <person name="Tagami M."/>
            <person name="Waki K."/>
            <person name="Watahiki A."/>
            <person name="Okamura-Oho Y."/>
            <person name="Suzuki H."/>
            <person name="Kawai J."/>
            <person name="Hayashizaki Y."/>
        </authorList>
    </citation>
    <scope>NUCLEOTIDE SEQUENCE [LARGE SCALE MRNA]</scope>
    <source>
        <strain>C57BL/6J</strain>
        <tissue>Head</tissue>
        <tissue>Olfactory bulb</tissue>
    </source>
</reference>
<reference key="2">
    <citation type="journal article" date="2004" name="Genome Res.">
        <title>The status, quality, and expansion of the NIH full-length cDNA project: the Mammalian Gene Collection (MGC).</title>
        <authorList>
            <consortium name="The MGC Project Team"/>
        </authorList>
    </citation>
    <scope>NUCLEOTIDE SEQUENCE [LARGE SCALE MRNA]</scope>
</reference>
<reference key="3">
    <citation type="journal article" date="2010" name="Cell">
        <title>A tissue-specific atlas of mouse protein phosphorylation and expression.</title>
        <authorList>
            <person name="Huttlin E.L."/>
            <person name="Jedrychowski M.P."/>
            <person name="Elias J.E."/>
            <person name="Goswami T."/>
            <person name="Rad R."/>
            <person name="Beausoleil S.A."/>
            <person name="Villen J."/>
            <person name="Haas W."/>
            <person name="Sowa M.E."/>
            <person name="Gygi S.P."/>
        </authorList>
    </citation>
    <scope>IDENTIFICATION BY MASS SPECTROMETRY [LARGE SCALE ANALYSIS]</scope>
    <source>
        <tissue>Heart</tissue>
        <tissue>Kidney</tissue>
    </source>
</reference>
<keyword id="KW-0496">Mitochondrion</keyword>
<keyword id="KW-1185">Reference proteome</keyword>
<keyword id="KW-0809">Transit peptide</keyword>
<comment type="function">
    <text evidence="1">In mitochondria, S-adenosylmethionine-dependent methyltransferase chaperone that supports both coenzyme Q biosynthesis, by stabilizing its components, such as COQ5, and NADH:ubiquinone oxidoreductase complex (complex I, MT-ND1) assembly, by stabilizing complex I assembly factors, such as NDUFAF5.</text>
</comment>
<comment type="subunit">
    <text evidence="1">Interacts (via TRM112 domain) with NDUFAF5; the interaction is direct and stabilizes NDUFAF5 protein. Interacts with COQ5; the interaction is direct, stabilizes COQ5 protein and associates PYURF with COQ enzyme complex.</text>
</comment>
<comment type="subcellular location">
    <subcellularLocation>
        <location evidence="1">Mitochondrion</location>
    </subcellularLocation>
</comment>
<comment type="similarity">
    <text evidence="3">Belongs to the PREY family.</text>
</comment>
<organism>
    <name type="scientific">Mus musculus</name>
    <name type="common">Mouse</name>
    <dbReference type="NCBI Taxonomy" id="10090"/>
    <lineage>
        <taxon>Eukaryota</taxon>
        <taxon>Metazoa</taxon>
        <taxon>Chordata</taxon>
        <taxon>Craniata</taxon>
        <taxon>Vertebrata</taxon>
        <taxon>Euteleostomi</taxon>
        <taxon>Mammalia</taxon>
        <taxon>Eutheria</taxon>
        <taxon>Euarchontoglires</taxon>
        <taxon>Glires</taxon>
        <taxon>Rodentia</taxon>
        <taxon>Myomorpha</taxon>
        <taxon>Muroidea</taxon>
        <taxon>Muridae</taxon>
        <taxon>Murinae</taxon>
        <taxon>Mus</taxon>
        <taxon>Mus</taxon>
    </lineage>
</organism>
<proteinExistence type="evidence at protein level"/>
<accession>Q9D1C3</accession>